<reference key="1">
    <citation type="journal article" date="2011" name="J. Bacteriol.">
        <title>Complete genome sequence and updated annotation of Desulfovibrio alaskensis G20.</title>
        <authorList>
            <person name="Hauser L.J."/>
            <person name="Land M.L."/>
            <person name="Brown S.D."/>
            <person name="Larimer F."/>
            <person name="Keller K.L."/>
            <person name="Rapp-Giles B.J."/>
            <person name="Price M.N."/>
            <person name="Lin M."/>
            <person name="Bruce D.C."/>
            <person name="Detter J.C."/>
            <person name="Tapia R."/>
            <person name="Han C.S."/>
            <person name="Goodwin L.A."/>
            <person name="Cheng J.F."/>
            <person name="Pitluck S."/>
            <person name="Copeland A."/>
            <person name="Lucas S."/>
            <person name="Nolan M."/>
            <person name="Lapidus A.L."/>
            <person name="Palumbo A.V."/>
            <person name="Wall J.D."/>
        </authorList>
    </citation>
    <scope>NUCLEOTIDE SEQUENCE [LARGE SCALE GENOMIC DNA]</scope>
    <source>
        <strain>ATCC BAA-1058 / DSM 17464 / G20</strain>
    </source>
</reference>
<protein>
    <recommendedName>
        <fullName evidence="1">Exodeoxyribonuclease 7 small subunit</fullName>
        <ecNumber evidence="1">3.1.11.6</ecNumber>
    </recommendedName>
    <alternativeName>
        <fullName evidence="1">Exodeoxyribonuclease VII small subunit</fullName>
        <shortName evidence="1">Exonuclease VII small subunit</shortName>
    </alternativeName>
</protein>
<organism>
    <name type="scientific">Oleidesulfovibrio alaskensis (strain ATCC BAA-1058 / DSM 17464 / G20)</name>
    <name type="common">Desulfovibrio alaskensis</name>
    <dbReference type="NCBI Taxonomy" id="207559"/>
    <lineage>
        <taxon>Bacteria</taxon>
        <taxon>Pseudomonadati</taxon>
        <taxon>Thermodesulfobacteriota</taxon>
        <taxon>Desulfovibrionia</taxon>
        <taxon>Desulfovibrionales</taxon>
        <taxon>Desulfovibrionaceae</taxon>
        <taxon>Oleidesulfovibrio</taxon>
    </lineage>
</organism>
<name>EX7S_OLEA2</name>
<dbReference type="EC" id="3.1.11.6" evidence="1"/>
<dbReference type="EMBL" id="CP000112">
    <property type="protein sequence ID" value="ABB38999.1"/>
    <property type="molecule type" value="Genomic_DNA"/>
</dbReference>
<dbReference type="RefSeq" id="WP_011368094.1">
    <property type="nucleotide sequence ID" value="NC_007519.1"/>
</dbReference>
<dbReference type="SMR" id="Q30Z97"/>
<dbReference type="STRING" id="207559.Dde_2202"/>
<dbReference type="KEGG" id="dde:Dde_2202"/>
<dbReference type="eggNOG" id="COG1722">
    <property type="taxonomic scope" value="Bacteria"/>
</dbReference>
<dbReference type="HOGENOM" id="CLU_145918_2_2_7"/>
<dbReference type="Proteomes" id="UP000002710">
    <property type="component" value="Chromosome"/>
</dbReference>
<dbReference type="GO" id="GO:0005829">
    <property type="term" value="C:cytosol"/>
    <property type="evidence" value="ECO:0007669"/>
    <property type="project" value="TreeGrafter"/>
</dbReference>
<dbReference type="GO" id="GO:0009318">
    <property type="term" value="C:exodeoxyribonuclease VII complex"/>
    <property type="evidence" value="ECO:0007669"/>
    <property type="project" value="InterPro"/>
</dbReference>
<dbReference type="GO" id="GO:0008855">
    <property type="term" value="F:exodeoxyribonuclease VII activity"/>
    <property type="evidence" value="ECO:0007669"/>
    <property type="project" value="UniProtKB-UniRule"/>
</dbReference>
<dbReference type="GO" id="GO:0006308">
    <property type="term" value="P:DNA catabolic process"/>
    <property type="evidence" value="ECO:0007669"/>
    <property type="project" value="UniProtKB-UniRule"/>
</dbReference>
<dbReference type="Gene3D" id="1.10.287.1040">
    <property type="entry name" value="Exonuclease VII, small subunit"/>
    <property type="match status" value="1"/>
</dbReference>
<dbReference type="HAMAP" id="MF_00337">
    <property type="entry name" value="Exonuc_7_S"/>
    <property type="match status" value="1"/>
</dbReference>
<dbReference type="InterPro" id="IPR003761">
    <property type="entry name" value="Exonuc_VII_S"/>
</dbReference>
<dbReference type="InterPro" id="IPR037004">
    <property type="entry name" value="Exonuc_VII_ssu_sf"/>
</dbReference>
<dbReference type="NCBIfam" id="NF010670">
    <property type="entry name" value="PRK14067.1"/>
    <property type="match status" value="1"/>
</dbReference>
<dbReference type="NCBIfam" id="TIGR01280">
    <property type="entry name" value="xseB"/>
    <property type="match status" value="1"/>
</dbReference>
<dbReference type="PANTHER" id="PTHR34137">
    <property type="entry name" value="EXODEOXYRIBONUCLEASE 7 SMALL SUBUNIT"/>
    <property type="match status" value="1"/>
</dbReference>
<dbReference type="PANTHER" id="PTHR34137:SF1">
    <property type="entry name" value="EXODEOXYRIBONUCLEASE 7 SMALL SUBUNIT"/>
    <property type="match status" value="1"/>
</dbReference>
<dbReference type="Pfam" id="PF02609">
    <property type="entry name" value="Exonuc_VII_S"/>
    <property type="match status" value="1"/>
</dbReference>
<dbReference type="PIRSF" id="PIRSF006488">
    <property type="entry name" value="Exonuc_VII_S"/>
    <property type="match status" value="1"/>
</dbReference>
<dbReference type="SUPFAM" id="SSF116842">
    <property type="entry name" value="XseB-like"/>
    <property type="match status" value="1"/>
</dbReference>
<proteinExistence type="inferred from homology"/>
<accession>Q30Z97</accession>
<gene>
    <name evidence="1" type="primary">xseB</name>
    <name type="ordered locus">Dde_2202</name>
</gene>
<keyword id="KW-0963">Cytoplasm</keyword>
<keyword id="KW-0269">Exonuclease</keyword>
<keyword id="KW-0378">Hydrolase</keyword>
<keyword id="KW-0540">Nuclease</keyword>
<keyword id="KW-1185">Reference proteome</keyword>
<evidence type="ECO:0000255" key="1">
    <source>
        <dbReference type="HAMAP-Rule" id="MF_00337"/>
    </source>
</evidence>
<comment type="function">
    <text evidence="1">Bidirectionally degrades single-stranded DNA into large acid-insoluble oligonucleotides, which are then degraded further into small acid-soluble oligonucleotides.</text>
</comment>
<comment type="catalytic activity">
    <reaction evidence="1">
        <text>Exonucleolytic cleavage in either 5'- to 3'- or 3'- to 5'-direction to yield nucleoside 5'-phosphates.</text>
        <dbReference type="EC" id="3.1.11.6"/>
    </reaction>
</comment>
<comment type="subunit">
    <text evidence="1">Heterooligomer composed of large and small subunits.</text>
</comment>
<comment type="subcellular location">
    <subcellularLocation>
        <location evidence="1">Cytoplasm</location>
    </subcellularLocation>
</comment>
<comment type="similarity">
    <text evidence="1">Belongs to the XseB family.</text>
</comment>
<feature type="chain" id="PRO_1000072048" description="Exodeoxyribonuclease 7 small subunit">
    <location>
        <begin position="1"/>
        <end position="80"/>
    </location>
</feature>
<sequence length="80" mass="8814">MTGTGTTGFEEQLARLQEIVRRLETGELPLEEGVALYKEGLELAAGCRKRLQTARNDIKVFSDGVLKDFDMPEDSPAADD</sequence>